<dbReference type="EMBL" id="AJ005666">
    <property type="protein sequence ID" value="CAA06662.1"/>
    <property type="molecule type" value="Genomic_DNA"/>
</dbReference>
<dbReference type="EMBL" id="AL590446">
    <property type="protein sequence ID" value="CAD25385.1"/>
    <property type="molecule type" value="Genomic_DNA"/>
</dbReference>
<dbReference type="EMBL" id="AF310677">
    <property type="protein sequence ID" value="AAK62814.1"/>
    <property type="molecule type" value="Genomic_DNA"/>
</dbReference>
<dbReference type="EMBL" id="AF310678">
    <property type="protein sequence ID" value="AAK62815.1"/>
    <property type="molecule type" value="Genomic_DNA"/>
</dbReference>
<dbReference type="EMBL" id="AF310679">
    <property type="protein sequence ID" value="AAK62816.1"/>
    <property type="molecule type" value="Genomic_DNA"/>
</dbReference>
<dbReference type="RefSeq" id="NP_585781.1">
    <property type="nucleotide sequence ID" value="NM_001041403.1"/>
</dbReference>
<dbReference type="STRING" id="284813.O76942"/>
<dbReference type="GlyCosmos" id="O76942">
    <property type="glycosylation" value="3 sites, No reported glycans"/>
</dbReference>
<dbReference type="GeneID" id="859204"/>
<dbReference type="KEGG" id="ecu:ECU06_0250"/>
<dbReference type="VEuPathDB" id="MicrosporidiaDB:ECU06_0250"/>
<dbReference type="HOGENOM" id="CLU_665687_0_0_1"/>
<dbReference type="InParanoid" id="O76942"/>
<dbReference type="OrthoDB" id="2194938at2759"/>
<dbReference type="Proteomes" id="UP000000819">
    <property type="component" value="Chromosome VI"/>
</dbReference>
<dbReference type="GO" id="GO:0044099">
    <property type="term" value="C:polar tube"/>
    <property type="evidence" value="ECO:0000314"/>
    <property type="project" value="CACAO"/>
</dbReference>
<dbReference type="GO" id="GO:0030435">
    <property type="term" value="P:sporulation resulting in formation of a cellular spore"/>
    <property type="evidence" value="ECO:0007669"/>
    <property type="project" value="UniProtKB-KW"/>
</dbReference>
<accession>O76942</accession>
<accession>Q964G9</accession>
<accession>Q964H0</accession>
<accession>Q964H1</accession>
<reference key="1">
    <citation type="journal article" date="1998" name="Mol. Microbiol.">
        <title>On proteins of the microsporidian invasive apparatus: complete sequence of a polar tube protein of Encephalitozoon cuniculi.</title>
        <authorList>
            <person name="Delbac F."/>
            <person name="Peyret P."/>
            <person name="Metenier G."/>
            <person name="David D."/>
            <person name="Danchin A."/>
            <person name="Vivares C.P."/>
        </authorList>
    </citation>
    <scope>NUCLEOTIDE SEQUENCE [GENOMIC DNA]</scope>
    <scope>PROTEIN SEQUENCE OF 23-42 AND 351-365</scope>
    <scope>CHARACTERIZATION</scope>
</reference>
<reference key="2">
    <citation type="journal article" date="2001" name="Nature">
        <title>Genome sequence and gene compaction of the eukaryote parasite Encephalitozoon cuniculi.</title>
        <authorList>
            <person name="Katinka M.D."/>
            <person name="Duprat S."/>
            <person name="Cornillot E."/>
            <person name="Metenier G."/>
            <person name="Thomarat F."/>
            <person name="Prensier G."/>
            <person name="Barbe V."/>
            <person name="Peyretaillade E."/>
            <person name="Brottier P."/>
            <person name="Wincker P."/>
            <person name="Delbac F."/>
            <person name="El Alaoui H."/>
            <person name="Peyret P."/>
            <person name="Saurin W."/>
            <person name="Gouy M."/>
            <person name="Weissenbach J."/>
            <person name="Vivares C.P."/>
        </authorList>
    </citation>
    <scope>NUCLEOTIDE SEQUENCE [LARGE SCALE GENOMIC DNA]</scope>
    <source>
        <strain>GB-M1</strain>
    </source>
</reference>
<reference key="3">
    <citation type="journal article" date="2001" name="J. Clin. Microbiol.">
        <title>Genotyping Encephalitozoon cuniculi by multilocus analyses of genes with repetitive sequences.</title>
        <authorList>
            <person name="Xiao L."/>
            <person name="Li L."/>
            <person name="Visvesvara G.S."/>
            <person name="Moura H."/>
            <person name="Didier E.S."/>
            <person name="Lal A.A."/>
        </authorList>
    </citation>
    <scope>NUCLEOTIDE SEQUENCE [GENOMIC DNA] OF 12-349</scope>
    <source>
        <strain>CDC:V282</strain>
        <strain>CDC:V385</strain>
        <strain>m104</strain>
    </source>
</reference>
<reference key="4">
    <citation type="journal article" date="2002" name="Mol. Biochem. Parasitol.">
        <title>The microsporidian polar tube: evidence for a third polar tube protein (PTP3) in Encephalitozoon cuniculi.</title>
        <authorList>
            <person name="Peuvel I."/>
            <person name="Peyret P."/>
            <person name="Metenier G."/>
            <person name="Vivares C.P."/>
            <person name="Delbac F."/>
        </authorList>
    </citation>
    <scope>INTERACTION WITH PTP2 AND PTP3</scope>
</reference>
<reference key="5">
    <citation type="journal article" date="2006" name="Proteomics">
        <title>Proteomic analysis of the eukaryotic parasite Encephalitozoon cuniculi (microsporidia): a reference map for proteins expressed in late sporogonial stages.</title>
        <authorList>
            <person name="Brosson D."/>
            <person name="Kuhn L."/>
            <person name="Delbac F."/>
            <person name="Garin J."/>
            <person name="Vivares C.P."/>
            <person name="Texier C."/>
        </authorList>
    </citation>
    <scope>IDENTIFICATION BY MASS SPECTROMETRY [LARGE SCALE ANALYSIS]</scope>
    <scope>DEVELOPMENTAL STAGE</scope>
</reference>
<comment type="function">
    <text>Involved with PTP2 and PTP3 in the formation of the polar tube through which the infectious agent is passed on to the host cell. Accounts for at least 70 percent of the mass of the polar tube.</text>
</comment>
<comment type="subunit">
    <text evidence="3">Interacts with PTP2 and PTP3.</text>
</comment>
<comment type="subcellular location">
    <subcellularLocation>
        <location>Spore polar tube</location>
    </subcellularLocation>
</comment>
<comment type="developmental stage">
    <text evidence="4">Found in spores. Expression is high during polar tube formation.</text>
</comment>
<feature type="signal peptide" evidence="5">
    <location>
        <begin position="1"/>
        <end position="22"/>
    </location>
</feature>
<feature type="chain" id="PRO_0000022181" description="Polar tube protein 1">
    <location>
        <begin position="23"/>
        <end position="395"/>
    </location>
</feature>
<feature type="repeat" description="1">
    <location>
        <begin position="179"/>
        <end position="204"/>
    </location>
</feature>
<feature type="repeat" description="2">
    <location>
        <begin position="205"/>
        <end position="230"/>
    </location>
</feature>
<feature type="repeat" description="3">
    <location>
        <begin position="231"/>
        <end position="256"/>
    </location>
</feature>
<feature type="repeat" description="4">
    <location>
        <begin position="257"/>
        <end position="282"/>
    </location>
</feature>
<feature type="region of interest" description="Disordered" evidence="2">
    <location>
        <begin position="59"/>
        <end position="95"/>
    </location>
</feature>
<feature type="region of interest" description="Disordered" evidence="2">
    <location>
        <begin position="111"/>
        <end position="133"/>
    </location>
</feature>
<feature type="region of interest" description="4 X 26 AA approximate tandem repeats">
    <location>
        <begin position="179"/>
        <end position="282"/>
    </location>
</feature>
<feature type="region of interest" description="Disordered" evidence="2">
    <location>
        <begin position="277"/>
        <end position="300"/>
    </location>
</feature>
<feature type="compositionally biased region" description="Low complexity" evidence="2">
    <location>
        <begin position="68"/>
        <end position="80"/>
    </location>
</feature>
<feature type="compositionally biased region" description="Polar residues" evidence="2">
    <location>
        <begin position="81"/>
        <end position="91"/>
    </location>
</feature>
<feature type="compositionally biased region" description="Low complexity" evidence="2">
    <location>
        <begin position="111"/>
        <end position="128"/>
    </location>
</feature>
<feature type="compositionally biased region" description="Low complexity" evidence="2">
    <location>
        <begin position="280"/>
        <end position="300"/>
    </location>
</feature>
<feature type="glycosylation site" description="N-linked (GlcNAc...) asparagine" evidence="1">
    <location>
        <position position="86"/>
    </location>
</feature>
<feature type="glycosylation site" description="N-linked (GlcNAc...) asparagine" evidence="1">
    <location>
        <position position="173"/>
    </location>
</feature>
<feature type="glycosylation site" description="N-linked (GlcNAc...) asparagine" evidence="1">
    <location>
        <position position="311"/>
    </location>
</feature>
<feature type="sequence variant" description="In strain: CDC:V282.">
    <location>
        <begin position="209"/>
        <end position="234"/>
    </location>
</feature>
<feature type="sequence variant" description="In strain: m104.">
    <original>I</original>
    <variation>V</variation>
    <location>
        <position position="210"/>
    </location>
</feature>
<evidence type="ECO:0000255" key="1"/>
<evidence type="ECO:0000256" key="2">
    <source>
        <dbReference type="SAM" id="MobiDB-lite"/>
    </source>
</evidence>
<evidence type="ECO:0000269" key="3">
    <source>
    </source>
</evidence>
<evidence type="ECO:0000269" key="4">
    <source>
    </source>
</evidence>
<evidence type="ECO:0000269" key="5">
    <source>
    </source>
</evidence>
<name>PTP1_ENCCU</name>
<protein>
    <recommendedName>
        <fullName>Polar tube protein 1</fullName>
    </recommendedName>
    <alternativeName>
        <fullName>Major polar tube protein</fullName>
        <shortName>Major PTP</shortName>
    </alternativeName>
</protein>
<sequence>MKGISKILSASIALMKLENVYSATALCSNAYGLTPGQQGMAQQPSYVLIPSTPGTIANCASGSQDTYSPSPAAPTSPVTPGKTSENETSPSAPAEDVGTCKIAVLKHCDAPGTTSGTTPGSGPCETPEQQQPLSVISTTPAVPVTVESAQSPSVVPVVPVVAHHQAVPGYYNNGTSGIPGQQQILSGTLPPGATLCQGQAMPSTPGQQQILSGTLPPGVTLCQGQATPSTPGQQQVLSGTLPPGVTLCQGQATPSTPGQQQVLSGTLLPGATLCQDQGMPGTSGVPGQQGQSSGQCCAPQIPNPVMPPSMNISGNGYPSSTAYSPNLGSLGSCVDIQKTGGTSCEQKPEKSATQYAMEACATPTPTVIIGNSEYLVGPGMYNAINSPCNTAVQCC</sequence>
<keyword id="KW-0903">Direct protein sequencing</keyword>
<keyword id="KW-0325">Glycoprotein</keyword>
<keyword id="KW-1185">Reference proteome</keyword>
<keyword id="KW-0677">Repeat</keyword>
<keyword id="KW-0732">Signal</keyword>
<keyword id="KW-0749">Sporulation</keyword>
<gene>
    <name type="primary">PTP1</name>
    <name type="ordered locus">ECU06_0250</name>
</gene>
<proteinExistence type="evidence at protein level"/>
<organism>
    <name type="scientific">Encephalitozoon cuniculi (strain GB-M1)</name>
    <name type="common">Microsporidian parasite</name>
    <dbReference type="NCBI Taxonomy" id="284813"/>
    <lineage>
        <taxon>Eukaryota</taxon>
        <taxon>Fungi</taxon>
        <taxon>Fungi incertae sedis</taxon>
        <taxon>Microsporidia</taxon>
        <taxon>Unikaryonidae</taxon>
        <taxon>Encephalitozoon</taxon>
    </lineage>
</organism>